<keyword id="KW-0240">DNA-directed RNA polymerase</keyword>
<keyword id="KW-0548">Nucleotidyltransferase</keyword>
<keyword id="KW-1185">Reference proteome</keyword>
<keyword id="KW-0804">Transcription</keyword>
<keyword id="KW-0808">Transferase</keyword>
<accession>Q8DRH6</accession>
<gene>
    <name evidence="1" type="primary">rpoY</name>
    <name type="ordered locus">spr0126</name>
</gene>
<name>RPOY_STRR6</name>
<feature type="chain" id="PRO_0000163148" description="DNA-directed RNA polymerase subunit epsilon">
    <location>
        <begin position="1"/>
        <end position="77"/>
    </location>
</feature>
<comment type="function">
    <text evidence="1">A non-essential component of RNA polymerase (RNAP).</text>
</comment>
<comment type="catalytic activity">
    <reaction evidence="1">
        <text>RNA(n) + a ribonucleoside 5'-triphosphate = RNA(n+1) + diphosphate</text>
        <dbReference type="Rhea" id="RHEA:21248"/>
        <dbReference type="Rhea" id="RHEA-COMP:14527"/>
        <dbReference type="Rhea" id="RHEA-COMP:17342"/>
        <dbReference type="ChEBI" id="CHEBI:33019"/>
        <dbReference type="ChEBI" id="CHEBI:61557"/>
        <dbReference type="ChEBI" id="CHEBI:140395"/>
        <dbReference type="EC" id="2.7.7.6"/>
    </reaction>
</comment>
<comment type="subunit">
    <text evidence="1">RNAP is composed of a core of 2 alpha, a beta and a beta' subunit. The core is associated with a delta subunit, and at least one of epsilon or omega. When a sigma factor is associated with the core the holoenzyme is formed, which can initiate transcription.</text>
</comment>
<comment type="similarity">
    <text evidence="1">Belongs to the RNA polymerase subunit epsilon family.</text>
</comment>
<protein>
    <recommendedName>
        <fullName evidence="1">DNA-directed RNA polymerase subunit epsilon</fullName>
        <shortName evidence="1">RNAP epsilon subunit</shortName>
        <ecNumber evidence="1">2.7.7.6</ecNumber>
    </recommendedName>
    <alternativeName>
        <fullName evidence="1">RNA polymerase epsilon subunit</fullName>
    </alternativeName>
    <alternativeName>
        <fullName evidence="1">Transcriptase subunit epsilon</fullName>
    </alternativeName>
</protein>
<dbReference type="EC" id="2.7.7.6" evidence="1"/>
<dbReference type="EMBL" id="AE007317">
    <property type="protein sequence ID" value="AAK98930.1"/>
    <property type="molecule type" value="Genomic_DNA"/>
</dbReference>
<dbReference type="PIR" id="F97887">
    <property type="entry name" value="F97887"/>
</dbReference>
<dbReference type="RefSeq" id="NP_357720.1">
    <property type="nucleotide sequence ID" value="NC_003098.1"/>
</dbReference>
<dbReference type="RefSeq" id="WP_000639589.1">
    <property type="nucleotide sequence ID" value="NC_003098.1"/>
</dbReference>
<dbReference type="SMR" id="Q8DRH6"/>
<dbReference type="STRING" id="171101.spr0126"/>
<dbReference type="KEGG" id="spr:spr0126"/>
<dbReference type="PATRIC" id="fig|171101.6.peg.145"/>
<dbReference type="eggNOG" id="COG5503">
    <property type="taxonomic scope" value="Bacteria"/>
</dbReference>
<dbReference type="HOGENOM" id="CLU_187518_0_0_9"/>
<dbReference type="Proteomes" id="UP000000586">
    <property type="component" value="Chromosome"/>
</dbReference>
<dbReference type="GO" id="GO:0000428">
    <property type="term" value="C:DNA-directed RNA polymerase complex"/>
    <property type="evidence" value="ECO:0007669"/>
    <property type="project" value="UniProtKB-KW"/>
</dbReference>
<dbReference type="GO" id="GO:0003677">
    <property type="term" value="F:DNA binding"/>
    <property type="evidence" value="ECO:0007669"/>
    <property type="project" value="UniProtKB-UniRule"/>
</dbReference>
<dbReference type="GO" id="GO:0003899">
    <property type="term" value="F:DNA-directed RNA polymerase activity"/>
    <property type="evidence" value="ECO:0007669"/>
    <property type="project" value="UniProtKB-UniRule"/>
</dbReference>
<dbReference type="GO" id="GO:0006351">
    <property type="term" value="P:DNA-templated transcription"/>
    <property type="evidence" value="ECO:0007669"/>
    <property type="project" value="UniProtKB-UniRule"/>
</dbReference>
<dbReference type="Gene3D" id="3.10.20.730">
    <property type="entry name" value="RNAP, epsilon subunit-like"/>
    <property type="match status" value="1"/>
</dbReference>
<dbReference type="HAMAP" id="MF_01553">
    <property type="entry name" value="RNApol_bact_RpoY"/>
    <property type="match status" value="1"/>
</dbReference>
<dbReference type="InterPro" id="IPR009907">
    <property type="entry name" value="RpoY"/>
</dbReference>
<dbReference type="NCBIfam" id="NF010188">
    <property type="entry name" value="PRK13667.1"/>
    <property type="match status" value="1"/>
</dbReference>
<dbReference type="Pfam" id="PF07288">
    <property type="entry name" value="RpoY"/>
    <property type="match status" value="1"/>
</dbReference>
<proteinExistence type="inferred from homology"/>
<organism>
    <name type="scientific">Streptococcus pneumoniae (strain ATCC BAA-255 / R6)</name>
    <dbReference type="NCBI Taxonomy" id="171101"/>
    <lineage>
        <taxon>Bacteria</taxon>
        <taxon>Bacillati</taxon>
        <taxon>Bacillota</taxon>
        <taxon>Bacilli</taxon>
        <taxon>Lactobacillales</taxon>
        <taxon>Streptococcaceae</taxon>
        <taxon>Streptococcus</taxon>
    </lineage>
</organism>
<evidence type="ECO:0000255" key="1">
    <source>
        <dbReference type="HAMAP-Rule" id="MF_01553"/>
    </source>
</evidence>
<sequence length="77" mass="9288">MIYKVFYQETKERSPRRETTRTLYLDIDASSELEGRITARQLVEENRPEYNIEYIELLSDKLLDYEKETGAFEITEF</sequence>
<reference key="1">
    <citation type="journal article" date="2001" name="J. Bacteriol.">
        <title>Genome of the bacterium Streptococcus pneumoniae strain R6.</title>
        <authorList>
            <person name="Hoskins J."/>
            <person name="Alborn W.E. Jr."/>
            <person name="Arnold J."/>
            <person name="Blaszczak L.C."/>
            <person name="Burgett S."/>
            <person name="DeHoff B.S."/>
            <person name="Estrem S.T."/>
            <person name="Fritz L."/>
            <person name="Fu D.-J."/>
            <person name="Fuller W."/>
            <person name="Geringer C."/>
            <person name="Gilmour R."/>
            <person name="Glass J.S."/>
            <person name="Khoja H."/>
            <person name="Kraft A.R."/>
            <person name="Lagace R.E."/>
            <person name="LeBlanc D.J."/>
            <person name="Lee L.N."/>
            <person name="Lefkowitz E.J."/>
            <person name="Lu J."/>
            <person name="Matsushima P."/>
            <person name="McAhren S.M."/>
            <person name="McHenney M."/>
            <person name="McLeaster K."/>
            <person name="Mundy C.W."/>
            <person name="Nicas T.I."/>
            <person name="Norris F.H."/>
            <person name="O'Gara M."/>
            <person name="Peery R.B."/>
            <person name="Robertson G.T."/>
            <person name="Rockey P."/>
            <person name="Sun P.-M."/>
            <person name="Winkler M.E."/>
            <person name="Yang Y."/>
            <person name="Young-Bellido M."/>
            <person name="Zhao G."/>
            <person name="Zook C.A."/>
            <person name="Baltz R.H."/>
            <person name="Jaskunas S.R."/>
            <person name="Rosteck P.R. Jr."/>
            <person name="Skatrud P.L."/>
            <person name="Glass J.I."/>
        </authorList>
    </citation>
    <scope>NUCLEOTIDE SEQUENCE [LARGE SCALE GENOMIC DNA]</scope>
    <source>
        <strain>ATCC BAA-255 / R6</strain>
    </source>
</reference>